<name>CRL_CITK8</name>
<reference key="1">
    <citation type="submission" date="2007-08" db="EMBL/GenBank/DDBJ databases">
        <authorList>
            <consortium name="The Citrobacter koseri Genome Sequencing Project"/>
            <person name="McClelland M."/>
            <person name="Sanderson E.K."/>
            <person name="Porwollik S."/>
            <person name="Spieth J."/>
            <person name="Clifton W.S."/>
            <person name="Latreille P."/>
            <person name="Courtney L."/>
            <person name="Wang C."/>
            <person name="Pepin K."/>
            <person name="Bhonagiri V."/>
            <person name="Nash W."/>
            <person name="Johnson M."/>
            <person name="Thiruvilangam P."/>
            <person name="Wilson R."/>
        </authorList>
    </citation>
    <scope>NUCLEOTIDE SEQUENCE [LARGE SCALE GENOMIC DNA]</scope>
    <source>
        <strain>ATCC BAA-895 / CDC 4225-83 / SGSC4696</strain>
    </source>
</reference>
<gene>
    <name evidence="1" type="primary">crl</name>
    <name type="ordered locus">CKO_02956</name>
</gene>
<accession>A8AKP8</accession>
<keyword id="KW-0010">Activator</keyword>
<keyword id="KW-0175">Coiled coil</keyword>
<keyword id="KW-0963">Cytoplasm</keyword>
<keyword id="KW-1185">Reference proteome</keyword>
<keyword id="KW-0804">Transcription</keyword>
<keyword id="KW-0805">Transcription regulation</keyword>
<dbReference type="EMBL" id="CP000822">
    <property type="protein sequence ID" value="ABV14061.1"/>
    <property type="molecule type" value="Genomic_DNA"/>
</dbReference>
<dbReference type="RefSeq" id="WP_012133774.1">
    <property type="nucleotide sequence ID" value="NC_009792.1"/>
</dbReference>
<dbReference type="SMR" id="A8AKP8"/>
<dbReference type="STRING" id="290338.CKO_02956"/>
<dbReference type="GeneID" id="45136772"/>
<dbReference type="KEGG" id="cko:CKO_02956"/>
<dbReference type="HOGENOM" id="CLU_136773_0_0_6"/>
<dbReference type="OrthoDB" id="6428303at2"/>
<dbReference type="Proteomes" id="UP000008148">
    <property type="component" value="Chromosome"/>
</dbReference>
<dbReference type="GO" id="GO:0005737">
    <property type="term" value="C:cytoplasm"/>
    <property type="evidence" value="ECO:0007669"/>
    <property type="project" value="UniProtKB-SubCell"/>
</dbReference>
<dbReference type="GO" id="GO:0045893">
    <property type="term" value="P:positive regulation of DNA-templated transcription"/>
    <property type="evidence" value="ECO:0007669"/>
    <property type="project" value="UniProtKB-UniRule"/>
</dbReference>
<dbReference type="Gene3D" id="3.30.310.230">
    <property type="entry name" value="Sigma factor-binding protein Crl monomer"/>
    <property type="match status" value="1"/>
</dbReference>
<dbReference type="HAMAP" id="MF_01178">
    <property type="entry name" value="Crl"/>
    <property type="match status" value="1"/>
</dbReference>
<dbReference type="InterPro" id="IPR009986">
    <property type="entry name" value="Tscrpt_reg_Crl"/>
</dbReference>
<dbReference type="InterPro" id="IPR038208">
    <property type="entry name" value="Tscrpt_reg_Crl_sf"/>
</dbReference>
<dbReference type="NCBIfam" id="NF008217">
    <property type="entry name" value="PRK10984.1"/>
    <property type="match status" value="1"/>
</dbReference>
<dbReference type="Pfam" id="PF07417">
    <property type="entry name" value="Crl"/>
    <property type="match status" value="1"/>
</dbReference>
<evidence type="ECO:0000255" key="1">
    <source>
        <dbReference type="HAMAP-Rule" id="MF_01178"/>
    </source>
</evidence>
<organism>
    <name type="scientific">Citrobacter koseri (strain ATCC BAA-895 / CDC 4225-83 / SGSC4696)</name>
    <dbReference type="NCBI Taxonomy" id="290338"/>
    <lineage>
        <taxon>Bacteria</taxon>
        <taxon>Pseudomonadati</taxon>
        <taxon>Pseudomonadota</taxon>
        <taxon>Gammaproteobacteria</taxon>
        <taxon>Enterobacterales</taxon>
        <taxon>Enterobacteriaceae</taxon>
        <taxon>Citrobacter</taxon>
    </lineage>
</organism>
<comment type="function">
    <text evidence="1">Binds to the sigma-S subunit of RNA polymerase, activating expression of sigma-S-regulated genes. Stimulates RNA polymerase holoenzyme formation and may bind to several other sigma factors, such as sigma-70 and sigma-32.</text>
</comment>
<comment type="subcellular location">
    <subcellularLocation>
        <location evidence="1">Cytoplasm</location>
    </subcellularLocation>
</comment>
<comment type="similarity">
    <text evidence="1">Belongs to the Crl family.</text>
</comment>
<sequence>MTLPSGHPKSRLIKKFTALGPYIREGQCEDNRFFFDCLAVCVNVKPAPEKREFWGWWMELEAQEKRFTYSYQFGLFDKEGNWTAVPIKETEVIERLEYTLREFHEKLRALLTSLNLALEPADNFKEPVKLTA</sequence>
<proteinExistence type="inferred from homology"/>
<feature type="chain" id="PRO_1000065783" description="Sigma factor-binding protein Crl">
    <location>
        <begin position="1"/>
        <end position="132"/>
    </location>
</feature>
<feature type="region of interest" description="Essential for activity" evidence="1">
    <location>
        <begin position="99"/>
        <end position="122"/>
    </location>
</feature>
<feature type="coiled-coil region" evidence="1">
    <location>
        <begin position="90"/>
        <end position="111"/>
    </location>
</feature>
<protein>
    <recommendedName>
        <fullName evidence="1">Sigma factor-binding protein Crl</fullName>
    </recommendedName>
</protein>